<organism>
    <name type="scientific">Mus musculus</name>
    <name type="common">Mouse</name>
    <dbReference type="NCBI Taxonomy" id="10090"/>
    <lineage>
        <taxon>Eukaryota</taxon>
        <taxon>Metazoa</taxon>
        <taxon>Chordata</taxon>
        <taxon>Craniata</taxon>
        <taxon>Vertebrata</taxon>
        <taxon>Euteleostomi</taxon>
        <taxon>Mammalia</taxon>
        <taxon>Eutheria</taxon>
        <taxon>Euarchontoglires</taxon>
        <taxon>Glires</taxon>
        <taxon>Rodentia</taxon>
        <taxon>Myomorpha</taxon>
        <taxon>Muroidea</taxon>
        <taxon>Muridae</taxon>
        <taxon>Murinae</taxon>
        <taxon>Mus</taxon>
        <taxon>Mus</taxon>
    </lineage>
</organism>
<comment type="function">
    <text evidence="2">Synthesis and degradation of fructose 2,6-bisphosphate.</text>
</comment>
<comment type="catalytic activity">
    <reaction evidence="2">
        <text>beta-D-fructose 2,6-bisphosphate + H2O = beta-D-fructose 6-phosphate + phosphate</text>
        <dbReference type="Rhea" id="RHEA:17289"/>
        <dbReference type="ChEBI" id="CHEBI:15377"/>
        <dbReference type="ChEBI" id="CHEBI:43474"/>
        <dbReference type="ChEBI" id="CHEBI:57634"/>
        <dbReference type="ChEBI" id="CHEBI:58579"/>
        <dbReference type="EC" id="3.1.3.46"/>
    </reaction>
</comment>
<comment type="catalytic activity">
    <reaction evidence="2">
        <text>beta-D-fructose 6-phosphate + ATP = beta-D-fructose 2,6-bisphosphate + ADP + H(+)</text>
        <dbReference type="Rhea" id="RHEA:15653"/>
        <dbReference type="ChEBI" id="CHEBI:15378"/>
        <dbReference type="ChEBI" id="CHEBI:30616"/>
        <dbReference type="ChEBI" id="CHEBI:57634"/>
        <dbReference type="ChEBI" id="CHEBI:58579"/>
        <dbReference type="ChEBI" id="CHEBI:456216"/>
        <dbReference type="EC" id="2.7.1.105"/>
    </reaction>
</comment>
<comment type="activity regulation">
    <text evidence="2">Phosphorylation results in the activation of the kinase activity.</text>
</comment>
<comment type="subunit">
    <text evidence="2 5">Homodimer (By similarity). Forms a heterodimer with PFKFB3 (By similarity).</text>
</comment>
<comment type="tissue specificity">
    <text>Highest levels in kidney; also found in heart, brain, spleen, lung, liver, skeletal muscle and testis.</text>
</comment>
<comment type="PTM">
    <text evidence="1">Phosphorylation by AMPK stimulates activity.</text>
</comment>
<comment type="similarity">
    <text evidence="8">In the C-terminal section; belongs to the phosphoglycerate mutase family.</text>
</comment>
<name>F262_MOUSE</name>
<evidence type="ECO:0000250" key="1"/>
<evidence type="ECO:0000250" key="2">
    <source>
        <dbReference type="UniProtKB" id="O60825"/>
    </source>
</evidence>
<evidence type="ECO:0000250" key="3">
    <source>
        <dbReference type="UniProtKB" id="P07953"/>
    </source>
</evidence>
<evidence type="ECO:0000250" key="4">
    <source>
        <dbReference type="UniProtKB" id="P26285"/>
    </source>
</evidence>
<evidence type="ECO:0000250" key="5">
    <source>
        <dbReference type="UniProtKB" id="Q16875"/>
    </source>
</evidence>
<evidence type="ECO:0000255" key="6"/>
<evidence type="ECO:0000256" key="7">
    <source>
        <dbReference type="SAM" id="MobiDB-lite"/>
    </source>
</evidence>
<evidence type="ECO:0000305" key="8"/>
<evidence type="ECO:0007744" key="9">
    <source>
    </source>
</evidence>
<accession>P70265</accession>
<accession>Q8VEI9</accession>
<feature type="initiator methionine" description="Removed" evidence="2">
    <location>
        <position position="1"/>
    </location>
</feature>
<feature type="chain" id="PRO_0000179965" description="6-phosphofructo-2-kinase/fructose-2,6-bisphosphatase 2">
    <location>
        <begin position="2"/>
        <end position="519"/>
    </location>
</feature>
<feature type="region of interest" description="Disordered" evidence="7">
    <location>
        <begin position="1"/>
        <end position="22"/>
    </location>
</feature>
<feature type="region of interest" description="6-phosphofructo-2-kinase">
    <location>
        <begin position="2"/>
        <end position="251"/>
    </location>
</feature>
<feature type="region of interest" description="Fructose-2,6-bisphosphatase">
    <location>
        <begin position="252"/>
        <end position="519"/>
    </location>
</feature>
<feature type="region of interest" description="Disordered" evidence="7">
    <location>
        <begin position="448"/>
        <end position="493"/>
    </location>
</feature>
<feature type="region of interest" description="Disordered" evidence="7">
    <location>
        <begin position="500"/>
        <end position="519"/>
    </location>
</feature>
<feature type="compositionally biased region" description="Polar residues" evidence="7">
    <location>
        <begin position="1"/>
        <end position="17"/>
    </location>
</feature>
<feature type="compositionally biased region" description="Polar residues" evidence="7">
    <location>
        <begin position="456"/>
        <end position="479"/>
    </location>
</feature>
<feature type="compositionally biased region" description="Polar residues" evidence="7">
    <location>
        <begin position="510"/>
        <end position="519"/>
    </location>
</feature>
<feature type="active site" evidence="6">
    <location>
        <position position="131"/>
    </location>
</feature>
<feature type="active site" evidence="6">
    <location>
        <position position="161"/>
    </location>
</feature>
<feature type="active site" description="Tele-phosphohistidine intermediate" evidence="5">
    <location>
        <position position="260"/>
    </location>
</feature>
<feature type="active site" description="Proton donor/acceptor" evidence="5">
    <location>
        <position position="329"/>
    </location>
</feature>
<feature type="binding site" evidence="5">
    <location>
        <begin position="48"/>
        <end position="56"/>
    </location>
    <ligand>
        <name>ATP</name>
        <dbReference type="ChEBI" id="CHEBI:30616"/>
    </ligand>
</feature>
<feature type="binding site" evidence="5">
    <location>
        <position position="81"/>
    </location>
    <ligand>
        <name>beta-D-fructose 6-phosphate</name>
        <dbReference type="ChEBI" id="CHEBI:57634"/>
    </ligand>
</feature>
<feature type="binding site" evidence="5">
    <location>
        <position position="105"/>
    </location>
    <ligand>
        <name>beta-D-fructose 6-phosphate</name>
        <dbReference type="ChEBI" id="CHEBI:57634"/>
    </ligand>
</feature>
<feature type="binding site" evidence="5">
    <location>
        <position position="133"/>
    </location>
    <ligand>
        <name>beta-D-fructose 6-phosphate</name>
        <dbReference type="ChEBI" id="CHEBI:57634"/>
    </ligand>
</feature>
<feature type="binding site" evidence="5">
    <location>
        <position position="139"/>
    </location>
    <ligand>
        <name>beta-D-fructose 6-phosphate</name>
        <dbReference type="ChEBI" id="CHEBI:57634"/>
    </ligand>
</feature>
<feature type="binding site" evidence="5">
    <location>
        <begin position="170"/>
        <end position="175"/>
    </location>
    <ligand>
        <name>ATP</name>
        <dbReference type="ChEBI" id="CHEBI:30616"/>
    </ligand>
</feature>
<feature type="binding site" evidence="5">
    <location>
        <position position="175"/>
    </location>
    <ligand>
        <name>beta-D-fructose 6-phosphate</name>
        <dbReference type="ChEBI" id="CHEBI:57634"/>
    </ligand>
</feature>
<feature type="binding site" evidence="5">
    <location>
        <position position="196"/>
    </location>
    <ligand>
        <name>beta-D-fructose 6-phosphate</name>
        <dbReference type="ChEBI" id="CHEBI:57634"/>
    </ligand>
</feature>
<feature type="binding site" evidence="5">
    <location>
        <position position="200"/>
    </location>
    <ligand>
        <name>beta-D-fructose 6-phosphate</name>
        <dbReference type="ChEBI" id="CHEBI:57634"/>
    </ligand>
</feature>
<feature type="binding site" evidence="5">
    <location>
        <position position="259"/>
    </location>
    <ligand>
        <name>beta-D-fructose 2,6-bisphosphate</name>
        <dbReference type="ChEBI" id="CHEBI:58579"/>
    </ligand>
</feature>
<feature type="binding site" evidence="5">
    <location>
        <position position="266"/>
    </location>
    <ligand>
        <name>beta-D-fructose 2,6-bisphosphate</name>
        <dbReference type="ChEBI" id="CHEBI:58579"/>
    </ligand>
</feature>
<feature type="binding site" evidence="5">
    <location>
        <position position="272"/>
    </location>
    <ligand>
        <name>beta-D-fructose 2,6-bisphosphate</name>
        <dbReference type="ChEBI" id="CHEBI:58579"/>
    </ligand>
</feature>
<feature type="binding site" evidence="5">
    <location>
        <position position="340"/>
    </location>
    <ligand>
        <name>beta-D-fructose 2,6-bisphosphate</name>
        <dbReference type="ChEBI" id="CHEBI:58579"/>
    </ligand>
</feature>
<feature type="binding site" evidence="3">
    <location>
        <begin position="351"/>
        <end position="354"/>
    </location>
    <ligand>
        <name>ATP</name>
        <dbReference type="ChEBI" id="CHEBI:30616"/>
    </ligand>
</feature>
<feature type="binding site" evidence="5">
    <location>
        <position position="354"/>
    </location>
    <ligand>
        <name>beta-D-fructose 2,6-bisphosphate</name>
        <dbReference type="ChEBI" id="CHEBI:58579"/>
    </ligand>
</feature>
<feature type="binding site" evidence="5">
    <location>
        <position position="358"/>
    </location>
    <ligand>
        <name>beta-D-fructose 2,6-bisphosphate</name>
        <dbReference type="ChEBI" id="CHEBI:58579"/>
    </ligand>
</feature>
<feature type="binding site" evidence="5">
    <location>
        <position position="369"/>
    </location>
    <ligand>
        <name>beta-D-fructose 2,6-bisphosphate</name>
        <dbReference type="ChEBI" id="CHEBI:58579"/>
    </ligand>
</feature>
<feature type="binding site" evidence="3">
    <location>
        <begin position="395"/>
        <end position="399"/>
    </location>
    <ligand>
        <name>ATP</name>
        <dbReference type="ChEBI" id="CHEBI:30616"/>
    </ligand>
</feature>
<feature type="binding site" evidence="5">
    <location>
        <position position="395"/>
    </location>
    <ligand>
        <name>beta-D-fructose 2,6-bisphosphate</name>
        <dbReference type="ChEBI" id="CHEBI:58579"/>
    </ligand>
</feature>
<feature type="binding site" evidence="3">
    <location>
        <position position="399"/>
    </location>
    <ligand>
        <name>beta-D-fructose 2,6-bisphosphate</name>
        <dbReference type="ChEBI" id="CHEBI:58579"/>
    </ligand>
</feature>
<feature type="binding site" evidence="5">
    <location>
        <position position="431"/>
    </location>
    <ligand>
        <name>ATP</name>
        <dbReference type="ChEBI" id="CHEBI:30616"/>
    </ligand>
</feature>
<feature type="site" description="Transition state stabilizer" evidence="5">
    <location>
        <position position="259"/>
    </location>
</feature>
<feature type="site" description="Transition state stabilizer" evidence="5">
    <location>
        <position position="266"/>
    </location>
</feature>
<feature type="site" description="Transition state stabilizer" evidence="5">
    <location>
        <position position="394"/>
    </location>
</feature>
<feature type="modified residue" description="N-acetylserine" evidence="2">
    <location>
        <position position="2"/>
    </location>
</feature>
<feature type="modified residue" description="Phosphoserine; by PKA" evidence="1">
    <location>
        <position position="32"/>
    </location>
</feature>
<feature type="modified residue" description="Phosphoserine" evidence="9">
    <location>
        <position position="469"/>
    </location>
</feature>
<feature type="modified residue" description="Phosphothreonine" evidence="2">
    <location>
        <position position="471"/>
    </location>
</feature>
<feature type="modified residue" description="Phosphothreonine; by PKC" evidence="4">
    <location>
        <position position="478"/>
    </location>
</feature>
<feature type="modified residue" description="Phosphoserine" evidence="9">
    <location>
        <position position="486"/>
    </location>
</feature>
<feature type="modified residue" description="Phosphoserine" evidence="2">
    <location>
        <position position="496"/>
    </location>
</feature>
<feature type="sequence conflict" description="In Ref. 2; AAH18418." evidence="8" ref="2">
    <original>T</original>
    <variation>P</variation>
    <location>
        <position position="9"/>
    </location>
</feature>
<feature type="sequence conflict" description="In Ref. 2; AAH18418." evidence="8" ref="2">
    <location>
        <position position="12"/>
    </location>
</feature>
<feature type="sequence conflict" description="In Ref. 2; AAH18418." evidence="8" ref="2">
    <original>M</original>
    <variation>I</variation>
    <location>
        <position position="222"/>
    </location>
</feature>
<feature type="sequence conflict" description="In Ref. 1; CAA67352." evidence="8" ref="1">
    <original>S</original>
    <variation>K</variation>
    <location>
        <position position="496"/>
    </location>
</feature>
<proteinExistence type="evidence at protein level"/>
<keyword id="KW-0007">Acetylation</keyword>
<keyword id="KW-0067">ATP-binding</keyword>
<keyword id="KW-0378">Hydrolase</keyword>
<keyword id="KW-0418">Kinase</keyword>
<keyword id="KW-0511">Multifunctional enzyme</keyword>
<keyword id="KW-0547">Nucleotide-binding</keyword>
<keyword id="KW-0597">Phosphoprotein</keyword>
<keyword id="KW-1185">Reference proteome</keyword>
<keyword id="KW-0808">Transferase</keyword>
<sequence>MSENSTFSTEDSCNSSYKPHASNLRRAGKTCSWASYMTNSPTLIVMIGLPARGKTYVSKKLTRYLNWIGVPTKVFNLGVYRREAVKSYQSYDFFRHDNEEAMKIRKQCALVALEDVKAYFTEESGQIAVFDATNTTRERRDMILNFAKQNAFKVFFVESVCDDPDVIAANILEVKVSSPDYPERNRENVMEDFLKRIECYKVTYQPLDPDNYDKDLSFIKVMNVGQRFLVNRVQDYIQSKIVYYLMNIHVHPRTIYLCRHGESEFNLLGKIGGDSGLSVRGKQFAHALKKFLEEQEIQDLKVWTSQLKRTIQTAESLGVTYEQWKILNEIDAGVCEEMTYSEIEQRYPEEFALRDQEKYLYRYPGGESYQDLVQRLEPVIMELERQGNILVISHQAVMRCLLAYFLDKGADELPYLRCPLHIIFKLTPVAYGCKVETITLNVDAVDTHRDKPTHNFPKSQTPVRMRRNSFTPLSSSNTIRRPRNYSVGSRPLKPLSPLRALDMQEGADQPKTQVSIPVV</sequence>
<protein>
    <recommendedName>
        <fullName>6-phosphofructo-2-kinase/fructose-2,6-bisphosphatase 2</fullName>
        <shortName>6PF-2-K/Fru-2,6-P2ase 2</shortName>
        <shortName>PFK/FBPase 2</shortName>
    </recommendedName>
    <alternativeName>
        <fullName>6PF-2-K/Fru-2,6-P2ase heart-type isozyme</fullName>
    </alternativeName>
    <domain>
        <recommendedName>
            <fullName>6-phosphofructo-2-kinase</fullName>
            <ecNumber evidence="2">2.7.1.105</ecNumber>
        </recommendedName>
    </domain>
    <domain>
        <recommendedName>
            <fullName>Fructose-2,6-bisphosphatase</fullName>
            <ecNumber evidence="2">3.1.3.46</ecNumber>
        </recommendedName>
    </domain>
</protein>
<dbReference type="EC" id="2.7.1.105" evidence="2"/>
<dbReference type="EC" id="3.1.3.46" evidence="2"/>
<dbReference type="EMBL" id="X98847">
    <property type="protein sequence ID" value="CAA67352.1"/>
    <property type="molecule type" value="mRNA"/>
</dbReference>
<dbReference type="EMBL" id="BC018418">
    <property type="protein sequence ID" value="AAH18418.1"/>
    <property type="molecule type" value="mRNA"/>
</dbReference>
<dbReference type="PIR" id="S74242">
    <property type="entry name" value="S74242"/>
</dbReference>
<dbReference type="RefSeq" id="NP_032851.2">
    <property type="nucleotide sequence ID" value="NM_008825.4"/>
</dbReference>
<dbReference type="SMR" id="P70265"/>
<dbReference type="BioGRID" id="202123">
    <property type="interactions" value="7"/>
</dbReference>
<dbReference type="ComplexPortal" id="CPX-2042">
    <property type="entry name" value="6-phosphofructo-2-kinase/fructose-2,6-biphosphatase 2 complex"/>
</dbReference>
<dbReference type="FunCoup" id="P70265">
    <property type="interactions" value="2544"/>
</dbReference>
<dbReference type="IntAct" id="P70265">
    <property type="interactions" value="2"/>
</dbReference>
<dbReference type="STRING" id="10090.ENSMUSP00000066426"/>
<dbReference type="iPTMnet" id="P70265"/>
<dbReference type="PhosphoSitePlus" id="P70265"/>
<dbReference type="jPOST" id="P70265"/>
<dbReference type="PaxDb" id="10090-ENSMUSP00000127587"/>
<dbReference type="PeptideAtlas" id="P70265"/>
<dbReference type="ProteomicsDB" id="271836"/>
<dbReference type="Pumba" id="P70265"/>
<dbReference type="DNASU" id="18640"/>
<dbReference type="GeneID" id="18640"/>
<dbReference type="KEGG" id="mmu:18640"/>
<dbReference type="AGR" id="MGI:107815"/>
<dbReference type="CTD" id="5208"/>
<dbReference type="MGI" id="MGI:107815">
    <property type="gene designation" value="Pfkfb2"/>
</dbReference>
<dbReference type="eggNOG" id="KOG0234">
    <property type="taxonomic scope" value="Eukaryota"/>
</dbReference>
<dbReference type="InParanoid" id="P70265"/>
<dbReference type="PhylomeDB" id="P70265"/>
<dbReference type="BRENDA" id="2.7.1.105">
    <property type="organism ID" value="3474"/>
</dbReference>
<dbReference type="BRENDA" id="3.1.3.46">
    <property type="organism ID" value="3474"/>
</dbReference>
<dbReference type="Reactome" id="R-MMU-9634600">
    <property type="pathway name" value="Regulation of glycolysis by fructose 2,6-bisphosphate metabolism"/>
</dbReference>
<dbReference type="BioGRID-ORCS" id="18640">
    <property type="hits" value="0 hits in 79 CRISPR screens"/>
</dbReference>
<dbReference type="ChiTaRS" id="Pfkfb2">
    <property type="organism name" value="mouse"/>
</dbReference>
<dbReference type="PRO" id="PR:P70265"/>
<dbReference type="Proteomes" id="UP000000589">
    <property type="component" value="Unplaced"/>
</dbReference>
<dbReference type="RNAct" id="P70265">
    <property type="molecule type" value="protein"/>
</dbReference>
<dbReference type="GO" id="GO:0003873">
    <property type="term" value="F:6-phosphofructo-2-kinase activity"/>
    <property type="evidence" value="ECO:0000315"/>
    <property type="project" value="MGI"/>
</dbReference>
<dbReference type="GO" id="GO:0005524">
    <property type="term" value="F:ATP binding"/>
    <property type="evidence" value="ECO:0007669"/>
    <property type="project" value="UniProtKB-KW"/>
</dbReference>
<dbReference type="GO" id="GO:0004331">
    <property type="term" value="F:fructose-2,6-bisphosphate 2-phosphatase activity"/>
    <property type="evidence" value="ECO:0000314"/>
    <property type="project" value="CACAO"/>
</dbReference>
<dbReference type="GO" id="GO:0006003">
    <property type="term" value="P:fructose 2,6-bisphosphate metabolic process"/>
    <property type="evidence" value="ECO:0007669"/>
    <property type="project" value="InterPro"/>
</dbReference>
<dbReference type="GO" id="GO:0006000">
    <property type="term" value="P:fructose metabolic process"/>
    <property type="evidence" value="ECO:0007669"/>
    <property type="project" value="InterPro"/>
</dbReference>
<dbReference type="GO" id="GO:0006096">
    <property type="term" value="P:glycolytic process"/>
    <property type="evidence" value="ECO:0000250"/>
    <property type="project" value="UniProtKB"/>
</dbReference>
<dbReference type="CDD" id="cd07067">
    <property type="entry name" value="HP_PGM_like"/>
    <property type="match status" value="1"/>
</dbReference>
<dbReference type="FunFam" id="3.40.50.1240:FF:000001">
    <property type="entry name" value="6-phosphofructo-2-kinase/fructose-2, 6-bisphosphatase 3 isoform 2"/>
    <property type="match status" value="1"/>
</dbReference>
<dbReference type="FunFam" id="3.40.50.300:FF:000047">
    <property type="entry name" value="6-phosphofructo-2-kinase/fructose-2, 6-bisphosphatase 3 isoform 2"/>
    <property type="match status" value="1"/>
</dbReference>
<dbReference type="Gene3D" id="3.40.50.300">
    <property type="entry name" value="P-loop containing nucleotide triphosphate hydrolases"/>
    <property type="match status" value="1"/>
</dbReference>
<dbReference type="Gene3D" id="3.40.50.1240">
    <property type="entry name" value="Phosphoglycerate mutase-like"/>
    <property type="match status" value="1"/>
</dbReference>
<dbReference type="InterPro" id="IPR003094">
    <property type="entry name" value="6Pfruct_kin"/>
</dbReference>
<dbReference type="InterPro" id="IPR013079">
    <property type="entry name" value="6Phosfructo_kin"/>
</dbReference>
<dbReference type="InterPro" id="IPR013078">
    <property type="entry name" value="His_Pase_superF_clade-1"/>
</dbReference>
<dbReference type="InterPro" id="IPR029033">
    <property type="entry name" value="His_PPase_superfam"/>
</dbReference>
<dbReference type="InterPro" id="IPR027417">
    <property type="entry name" value="P-loop_NTPase"/>
</dbReference>
<dbReference type="InterPro" id="IPR001345">
    <property type="entry name" value="PG/BPGM_mutase_AS"/>
</dbReference>
<dbReference type="PANTHER" id="PTHR10606">
    <property type="entry name" value="6-PHOSPHOFRUCTO-2-KINASE/FRUCTOSE-2,6-BISPHOSPHATASE"/>
    <property type="match status" value="1"/>
</dbReference>
<dbReference type="PANTHER" id="PTHR10606:SF48">
    <property type="entry name" value="6-PHOSPHOFRUCTO-2-KINASE_FRUCTOSE-2,6-BISPHOSPHATASE 2"/>
    <property type="match status" value="1"/>
</dbReference>
<dbReference type="Pfam" id="PF01591">
    <property type="entry name" value="6PF2K"/>
    <property type="match status" value="1"/>
</dbReference>
<dbReference type="Pfam" id="PF00300">
    <property type="entry name" value="His_Phos_1"/>
    <property type="match status" value="1"/>
</dbReference>
<dbReference type="PIRSF" id="PIRSF000709">
    <property type="entry name" value="6PFK_2-Ptase"/>
    <property type="match status" value="1"/>
</dbReference>
<dbReference type="PRINTS" id="PR00991">
    <property type="entry name" value="6PFRUCTKNASE"/>
</dbReference>
<dbReference type="SMART" id="SM00855">
    <property type="entry name" value="PGAM"/>
    <property type="match status" value="1"/>
</dbReference>
<dbReference type="SUPFAM" id="SSF52540">
    <property type="entry name" value="P-loop containing nucleoside triphosphate hydrolases"/>
    <property type="match status" value="1"/>
</dbReference>
<dbReference type="SUPFAM" id="SSF53254">
    <property type="entry name" value="Phosphoglycerate mutase-like"/>
    <property type="match status" value="1"/>
</dbReference>
<dbReference type="PROSITE" id="PS00175">
    <property type="entry name" value="PG_MUTASE"/>
    <property type="match status" value="1"/>
</dbReference>
<reference key="1">
    <citation type="journal article" date="1996" name="FEBS Lett.">
        <title>Molecular cloning and tissue-specific expression of mouse kidney 6-phosphofructo-2-kinase/fructose-2,6-bisphosphatase.</title>
        <authorList>
            <person name="Batra R.S."/>
            <person name="Brown R.M."/>
            <person name="Brown G.K."/>
            <person name="Craig I.W."/>
        </authorList>
    </citation>
    <scope>NUCLEOTIDE SEQUENCE [MRNA]</scope>
    <source>
        <strain>BALB/cJ</strain>
        <tissue>Kidney</tissue>
    </source>
</reference>
<reference key="2">
    <citation type="journal article" date="2004" name="Genome Res.">
        <title>The status, quality, and expansion of the NIH full-length cDNA project: the Mammalian Gene Collection (MGC).</title>
        <authorList>
            <consortium name="The MGC Project Team"/>
        </authorList>
    </citation>
    <scope>NUCLEOTIDE SEQUENCE [LARGE SCALE MRNA]</scope>
</reference>
<reference key="3">
    <citation type="journal article" date="2010" name="Cell">
        <title>A tissue-specific atlas of mouse protein phosphorylation and expression.</title>
        <authorList>
            <person name="Huttlin E.L."/>
            <person name="Jedrychowski M.P."/>
            <person name="Elias J.E."/>
            <person name="Goswami T."/>
            <person name="Rad R."/>
            <person name="Beausoleil S.A."/>
            <person name="Villen J."/>
            <person name="Haas W."/>
            <person name="Sowa M.E."/>
            <person name="Gygi S.P."/>
        </authorList>
    </citation>
    <scope>PHOSPHORYLATION [LARGE SCALE ANALYSIS] AT SER-469 AND SER-486</scope>
    <scope>IDENTIFICATION BY MASS SPECTROMETRY [LARGE SCALE ANALYSIS]</scope>
    <source>
        <tissue>Brain</tissue>
        <tissue>Brown adipose tissue</tissue>
        <tissue>Heart</tissue>
        <tissue>Kidney</tissue>
        <tissue>Lung</tissue>
        <tissue>Spleen</tissue>
        <tissue>Testis</tissue>
    </source>
</reference>
<gene>
    <name type="primary">Pfkfb2</name>
</gene>